<accession>Q5SMC1</accession>
<reference key="1">
    <citation type="submission" date="2004-11" db="EMBL/GenBank/DDBJ databases">
        <title>Complete genome sequence of Thermus thermophilus HB8.</title>
        <authorList>
            <person name="Masui R."/>
            <person name="Kurokawa K."/>
            <person name="Nakagawa N."/>
            <person name="Tokunaga F."/>
            <person name="Koyama Y."/>
            <person name="Shibata T."/>
            <person name="Oshima T."/>
            <person name="Yokoyama S."/>
            <person name="Yasunaga T."/>
            <person name="Kuramitsu S."/>
        </authorList>
    </citation>
    <scope>NUCLEOTIDE SEQUENCE [LARGE SCALE GENOMIC DNA]</scope>
    <source>
        <strain>ATCC 27634 / DSM 579 / HB8</strain>
    </source>
</reference>
<protein>
    <recommendedName>
        <fullName evidence="1">Glucose-1-phosphate adenylyltransferase</fullName>
        <ecNumber evidence="1">2.7.7.27</ecNumber>
    </recommendedName>
    <alternativeName>
        <fullName evidence="1">ADP-glucose pyrophosphorylase</fullName>
        <shortName evidence="1">ADPGlc PPase</shortName>
    </alternativeName>
    <alternativeName>
        <fullName evidence="1">ADP-glucose synthase</fullName>
    </alternativeName>
</protein>
<comment type="function">
    <text evidence="1">Involved in the biosynthesis of ADP-glucose, a building block required for the elongation reactions to produce glycogen. Catalyzes the reaction between ATP and alpha-D-glucose 1-phosphate (G1P) to produce pyrophosphate and ADP-Glc.</text>
</comment>
<comment type="catalytic activity">
    <reaction evidence="1">
        <text>alpha-D-glucose 1-phosphate + ATP + H(+) = ADP-alpha-D-glucose + diphosphate</text>
        <dbReference type="Rhea" id="RHEA:12120"/>
        <dbReference type="ChEBI" id="CHEBI:15378"/>
        <dbReference type="ChEBI" id="CHEBI:30616"/>
        <dbReference type="ChEBI" id="CHEBI:33019"/>
        <dbReference type="ChEBI" id="CHEBI:57498"/>
        <dbReference type="ChEBI" id="CHEBI:58601"/>
        <dbReference type="EC" id="2.7.7.27"/>
    </reaction>
</comment>
<comment type="pathway">
    <text evidence="1">Glycan biosynthesis; glycogen biosynthesis.</text>
</comment>
<comment type="subunit">
    <text evidence="1">Homotetramer.</text>
</comment>
<comment type="similarity">
    <text evidence="1">Belongs to the bacterial/plant glucose-1-phosphate adenylyltransferase family.</text>
</comment>
<gene>
    <name evidence="1" type="primary">glgC</name>
    <name type="ordered locus">TTHA0022</name>
</gene>
<sequence length="414" mass="47225">MVKVEVLGMILAGGQGSRLYPLTAKRAKPAVPFGAKYRIIDFVLNNFVNSGIYAIYVLTQYKAQSLTEHIQRYWRFGAFLEDHFILLVPAQMYRYEELGPVWYRGTADAIYQNLHLVHNHAPKAVAVFGGDHIFKMNIRHMVEYHYDTRADITIAAYPVPVAEATRFGVLQVDEEWRITEFQEKPEEPKPIPGRPDMALASMGNYIFRTEALFELLEADARDETSAHDFGKDVIPRALREGYRVYAYDFHRNPIPGQEGPNLYWRDVGTLDAYYEASMDLVKVVPEFDLFNPEWPLRTANLFSPPAKFVHETGERVGRALNSLLAGGVIVSGGTVRESVLFRRVRVNSYSLVERSVLFDDVEVGRYCRIRNAIIDKNVKIPPHTEIGYDLELDRARGFTVTPEGVVVVPKGYRF</sequence>
<evidence type="ECO:0000255" key="1">
    <source>
        <dbReference type="HAMAP-Rule" id="MF_00624"/>
    </source>
</evidence>
<feature type="chain" id="PRO_0000195342" description="Glucose-1-phosphate adenylyltransferase">
    <location>
        <begin position="1"/>
        <end position="414"/>
    </location>
</feature>
<feature type="binding site" evidence="1">
    <location>
        <position position="103"/>
    </location>
    <ligand>
        <name>alpha-D-glucose 1-phosphate</name>
        <dbReference type="ChEBI" id="CHEBI:58601"/>
    </ligand>
</feature>
<feature type="binding site" evidence="1">
    <location>
        <position position="168"/>
    </location>
    <ligand>
        <name>alpha-D-glucose 1-phosphate</name>
        <dbReference type="ChEBI" id="CHEBI:58601"/>
    </ligand>
</feature>
<feature type="binding site" evidence="1">
    <location>
        <begin position="183"/>
        <end position="184"/>
    </location>
    <ligand>
        <name>alpha-D-glucose 1-phosphate</name>
        <dbReference type="ChEBI" id="CHEBI:58601"/>
    </ligand>
</feature>
<feature type="binding site" evidence="1">
    <location>
        <position position="201"/>
    </location>
    <ligand>
        <name>alpha-D-glucose 1-phosphate</name>
        <dbReference type="ChEBI" id="CHEBI:58601"/>
    </ligand>
</feature>
<organism>
    <name type="scientific">Thermus thermophilus (strain ATCC 27634 / DSM 579 / HB8)</name>
    <dbReference type="NCBI Taxonomy" id="300852"/>
    <lineage>
        <taxon>Bacteria</taxon>
        <taxon>Thermotogati</taxon>
        <taxon>Deinococcota</taxon>
        <taxon>Deinococci</taxon>
        <taxon>Thermales</taxon>
        <taxon>Thermaceae</taxon>
        <taxon>Thermus</taxon>
    </lineage>
</organism>
<keyword id="KW-0067">ATP-binding</keyword>
<keyword id="KW-0119">Carbohydrate metabolism</keyword>
<keyword id="KW-0320">Glycogen biosynthesis</keyword>
<keyword id="KW-0321">Glycogen metabolism</keyword>
<keyword id="KW-0547">Nucleotide-binding</keyword>
<keyword id="KW-0548">Nucleotidyltransferase</keyword>
<keyword id="KW-1185">Reference proteome</keyword>
<keyword id="KW-0808">Transferase</keyword>
<dbReference type="EC" id="2.7.7.27" evidence="1"/>
<dbReference type="EMBL" id="AP008226">
    <property type="protein sequence ID" value="BAD69845.1"/>
    <property type="molecule type" value="Genomic_DNA"/>
</dbReference>
<dbReference type="RefSeq" id="WP_011227648.1">
    <property type="nucleotide sequence ID" value="NC_006461.1"/>
</dbReference>
<dbReference type="RefSeq" id="YP_143288.1">
    <property type="nucleotide sequence ID" value="NC_006461.1"/>
</dbReference>
<dbReference type="SMR" id="Q5SMC1"/>
<dbReference type="EnsemblBacteria" id="BAD69845">
    <property type="protein sequence ID" value="BAD69845"/>
    <property type="gene ID" value="BAD69845"/>
</dbReference>
<dbReference type="GeneID" id="3168116"/>
<dbReference type="KEGG" id="ttj:TTHA0022"/>
<dbReference type="PATRIC" id="fig|300852.9.peg.23"/>
<dbReference type="eggNOG" id="COG0448">
    <property type="taxonomic scope" value="Bacteria"/>
</dbReference>
<dbReference type="HOGENOM" id="CLU_029499_14_1_0"/>
<dbReference type="PhylomeDB" id="Q5SMC1"/>
<dbReference type="UniPathway" id="UPA00164"/>
<dbReference type="Proteomes" id="UP000000532">
    <property type="component" value="Chromosome"/>
</dbReference>
<dbReference type="GO" id="GO:0005524">
    <property type="term" value="F:ATP binding"/>
    <property type="evidence" value="ECO:0007669"/>
    <property type="project" value="UniProtKB-KW"/>
</dbReference>
<dbReference type="GO" id="GO:0008878">
    <property type="term" value="F:glucose-1-phosphate adenylyltransferase activity"/>
    <property type="evidence" value="ECO:0007669"/>
    <property type="project" value="UniProtKB-UniRule"/>
</dbReference>
<dbReference type="GO" id="GO:0005978">
    <property type="term" value="P:glycogen biosynthetic process"/>
    <property type="evidence" value="ECO:0007669"/>
    <property type="project" value="UniProtKB-UniRule"/>
</dbReference>
<dbReference type="CDD" id="cd02508">
    <property type="entry name" value="ADP_Glucose_PP"/>
    <property type="match status" value="1"/>
</dbReference>
<dbReference type="CDD" id="cd04651">
    <property type="entry name" value="LbH_G1P_AT_C"/>
    <property type="match status" value="1"/>
</dbReference>
<dbReference type="Gene3D" id="2.160.10.10">
    <property type="entry name" value="Hexapeptide repeat proteins"/>
    <property type="match status" value="1"/>
</dbReference>
<dbReference type="Gene3D" id="3.90.550.10">
    <property type="entry name" value="Spore Coat Polysaccharide Biosynthesis Protein SpsA, Chain A"/>
    <property type="match status" value="1"/>
</dbReference>
<dbReference type="HAMAP" id="MF_00624">
    <property type="entry name" value="GlgC"/>
    <property type="match status" value="1"/>
</dbReference>
<dbReference type="InterPro" id="IPR011831">
    <property type="entry name" value="ADP-Glc_PPase"/>
</dbReference>
<dbReference type="InterPro" id="IPR005836">
    <property type="entry name" value="ADP_Glu_pyroP_CS"/>
</dbReference>
<dbReference type="InterPro" id="IPR023049">
    <property type="entry name" value="GlgC_bac"/>
</dbReference>
<dbReference type="InterPro" id="IPR056818">
    <property type="entry name" value="GlmU/GlgC-like_hexapep"/>
</dbReference>
<dbReference type="InterPro" id="IPR005835">
    <property type="entry name" value="NTP_transferase_dom"/>
</dbReference>
<dbReference type="InterPro" id="IPR029044">
    <property type="entry name" value="Nucleotide-diphossugar_trans"/>
</dbReference>
<dbReference type="InterPro" id="IPR011004">
    <property type="entry name" value="Trimer_LpxA-like_sf"/>
</dbReference>
<dbReference type="NCBIfam" id="TIGR02091">
    <property type="entry name" value="glgC"/>
    <property type="match status" value="1"/>
</dbReference>
<dbReference type="NCBIfam" id="NF001947">
    <property type="entry name" value="PRK00725.1"/>
    <property type="match status" value="1"/>
</dbReference>
<dbReference type="NCBIfam" id="NF002023">
    <property type="entry name" value="PRK00844.1"/>
    <property type="match status" value="1"/>
</dbReference>
<dbReference type="PANTHER" id="PTHR43523:SF2">
    <property type="entry name" value="GLUCOSE-1-PHOSPHATE ADENYLYLTRANSFERASE"/>
    <property type="match status" value="1"/>
</dbReference>
<dbReference type="PANTHER" id="PTHR43523">
    <property type="entry name" value="GLUCOSE-1-PHOSPHATE ADENYLYLTRANSFERASE-RELATED"/>
    <property type="match status" value="1"/>
</dbReference>
<dbReference type="Pfam" id="PF24894">
    <property type="entry name" value="Hexapep_GlmU"/>
    <property type="match status" value="1"/>
</dbReference>
<dbReference type="Pfam" id="PF00483">
    <property type="entry name" value="NTP_transferase"/>
    <property type="match status" value="1"/>
</dbReference>
<dbReference type="SUPFAM" id="SSF53448">
    <property type="entry name" value="Nucleotide-diphospho-sugar transferases"/>
    <property type="match status" value="1"/>
</dbReference>
<dbReference type="SUPFAM" id="SSF51161">
    <property type="entry name" value="Trimeric LpxA-like enzymes"/>
    <property type="match status" value="1"/>
</dbReference>
<dbReference type="PROSITE" id="PS00808">
    <property type="entry name" value="ADP_GLC_PYROPHOSPH_1"/>
    <property type="match status" value="1"/>
</dbReference>
<dbReference type="PROSITE" id="PS00809">
    <property type="entry name" value="ADP_GLC_PYROPHOSPH_2"/>
    <property type="match status" value="1"/>
</dbReference>
<dbReference type="PROSITE" id="PS00810">
    <property type="entry name" value="ADP_GLC_PYROPHOSPH_3"/>
    <property type="match status" value="1"/>
</dbReference>
<name>GLGC_THET8</name>
<proteinExistence type="inferred from homology"/>